<protein>
    <recommendedName>
        <fullName>Calpain-15</fullName>
        <ecNumber>3.4.22.-</ecNumber>
    </recommendedName>
    <alternativeName>
        <fullName>Small optic lobes homolog</fullName>
    </alternativeName>
</protein>
<feature type="chain" id="PRO_0000278770" description="Calpain-15">
    <location>
        <begin position="1"/>
        <end position="1086"/>
    </location>
</feature>
<feature type="domain" description="Calpain catalytic" evidence="2">
    <location>
        <begin position="487"/>
        <end position="793"/>
    </location>
</feature>
<feature type="zinc finger region" description="RanBP2-type 1" evidence="3">
    <location>
        <begin position="3"/>
        <end position="32"/>
    </location>
</feature>
<feature type="zinc finger region" description="RanBP2-type 2" evidence="3">
    <location>
        <begin position="44"/>
        <end position="73"/>
    </location>
</feature>
<feature type="zinc finger region" description="RanBP2-type 3" evidence="3">
    <location>
        <begin position="143"/>
        <end position="172"/>
    </location>
</feature>
<feature type="zinc finger region" description="RanBP2-type 4" evidence="3">
    <location>
        <begin position="338"/>
        <end position="369"/>
    </location>
</feature>
<feature type="zinc finger region" description="RanBP2-type 5" evidence="3">
    <location>
        <begin position="412"/>
        <end position="441"/>
    </location>
</feature>
<feature type="region of interest" description="Disordered" evidence="4">
    <location>
        <begin position="111"/>
        <end position="148"/>
    </location>
</feature>
<feature type="region of interest" description="Disordered" evidence="4">
    <location>
        <begin position="199"/>
        <end position="280"/>
    </location>
</feature>
<feature type="region of interest" description="Disordered" evidence="4">
    <location>
        <begin position="299"/>
        <end position="321"/>
    </location>
</feature>
<feature type="region of interest" description="Disordered" evidence="4">
    <location>
        <begin position="1064"/>
        <end position="1086"/>
    </location>
</feature>
<feature type="compositionally biased region" description="Acidic residues" evidence="4">
    <location>
        <begin position="125"/>
        <end position="140"/>
    </location>
</feature>
<feature type="compositionally biased region" description="Pro residues" evidence="4">
    <location>
        <begin position="223"/>
        <end position="233"/>
    </location>
</feature>
<feature type="active site" evidence="1">
    <location>
        <position position="552"/>
    </location>
</feature>
<feature type="active site" evidence="1">
    <location>
        <position position="717"/>
    </location>
</feature>
<feature type="active site" evidence="1">
    <location>
        <position position="737"/>
    </location>
</feature>
<feature type="modified residue" description="Phosphoserine" evidence="9">
    <location>
        <position position="296"/>
    </location>
</feature>
<feature type="modified residue" description="Phosphoserine" evidence="9">
    <location>
        <position position="335"/>
    </location>
</feature>
<feature type="modified residue" description="Phosphoserine" evidence="9">
    <location>
        <position position="338"/>
    </location>
</feature>
<feature type="modified residue" description="Phosphoserine" evidence="9">
    <location>
        <position position="1070"/>
    </location>
</feature>
<feature type="splice variant" id="VSP_023361" description="In isoform 2." evidence="7">
    <original>TVAPRCSACGCSKLHGFQEHGEPPTHCPDCGADKPSPCGRSCGRVSSAQKAARVLPERPGQ</original>
    <variation>CPPGLQPLGRGPESLPRAAGPRAGCVQLEAGHGGARGSPADHAGRRHHPAHREPRRAARGP</variation>
    <location>
        <begin position="355"/>
        <end position="415"/>
    </location>
</feature>
<feature type="splice variant" id="VSP_023362" description="In isoform 2." evidence="7">
    <location>
        <begin position="416"/>
        <end position="1086"/>
    </location>
</feature>
<feature type="sequence variant" id="VAR_085921" description="In OGIN; uncertain significance; dbSNP:rs374949685." evidence="5">
    <original>S</original>
    <variation>L</variation>
    <location>
        <position position="613"/>
    </location>
</feature>
<feature type="sequence variant" id="VAR_085922" description="In OGIN; uncertain significance; dbSNP:rs2142072159." evidence="5">
    <original>S</original>
    <variation>F</variation>
    <location>
        <position position="720"/>
    </location>
</feature>
<feature type="sequence variant" id="VAR_085923" description="In OGIN; uncertain significance; dbSNP:rs762523863." evidence="5">
    <original>R</original>
    <variation>W</variation>
    <location>
        <position position="800"/>
    </location>
</feature>
<feature type="sequence variant" id="VAR_085924" description="In OGIN; uncertain significance; dbSNP:rs2142085042." evidence="5">
    <original>G</original>
    <variation>S</variation>
    <location>
        <position position="969"/>
    </location>
</feature>
<feature type="sequence variant" id="VAR_085925" description="In OGIN; uncertain significance; dbSNP:rs2142086271." evidence="5">
    <original>R</original>
    <variation>K</variation>
    <location>
        <position position="1028"/>
    </location>
</feature>
<comment type="interaction">
    <interactant intactId="EBI-6149008">
        <id>O75808</id>
    </interactant>
    <interactant intactId="EBI-724310">
        <id>Q15038</id>
        <label>DAZAP2</label>
    </interactant>
    <organismsDiffer>false</organismsDiffer>
    <experiments>3</experiments>
</comment>
<comment type="interaction">
    <interactant intactId="EBI-6149008">
        <id>O75808</id>
    </interactant>
    <interactant intactId="EBI-747754">
        <id>P28799</id>
        <label>GRN</label>
    </interactant>
    <organismsDiffer>false</organismsDiffer>
    <experiments>3</experiments>
</comment>
<comment type="interaction">
    <interactant intactId="EBI-6149008">
        <id>O75808</id>
    </interactant>
    <interactant intactId="EBI-7133736">
        <id>P07686</id>
        <label>HEXB</label>
    </interactant>
    <organismsDiffer>false</organismsDiffer>
    <experiments>3</experiments>
</comment>
<comment type="interaction">
    <interactant intactId="EBI-6149008">
        <id>O75808</id>
    </interactant>
    <interactant intactId="EBI-723313">
        <id>Q9NWF9</id>
        <label>RNF216</label>
    </interactant>
    <organismsDiffer>false</organismsDiffer>
    <experiments>3</experiments>
</comment>
<comment type="interaction">
    <interactant intactId="EBI-6149008">
        <id>O75808</id>
    </interactant>
    <interactant intactId="EBI-355744">
        <id>Q12933</id>
        <label>TRAF2</label>
    </interactant>
    <organismsDiffer>false</organismsDiffer>
    <experiments>3</experiments>
</comment>
<comment type="interaction">
    <interactant intactId="EBI-6149008">
        <id>O75808</id>
    </interactant>
    <interactant intactId="EBI-947187">
        <id>Q9UHD9</id>
        <label>UBQLN2</label>
    </interactant>
    <organismsDiffer>false</organismsDiffer>
    <experiments>3</experiments>
</comment>
<comment type="alternative products">
    <event type="alternative splicing"/>
    <isoform>
        <id>O75808-1</id>
        <name>1</name>
        <sequence type="displayed"/>
    </isoform>
    <isoform>
        <id>O75808-2</id>
        <name>2</name>
        <sequence type="described" ref="VSP_023361 VSP_023362"/>
    </isoform>
</comment>
<comment type="tissue specificity">
    <text evidence="6">Widely expressed with higher expression in brain.</text>
</comment>
<comment type="disease" evidence="5">
    <disease id="DI-06103">
        <name>Oculogastrointestinal neurodevelopmental syndrome</name>
        <acronym>OGIN</acronym>
        <description>An autosomal recessive neurodevelopmental disorder characterized by growth deficits, microcephaly, global developmental delay, hearing loss, and microphthalmia and/or coloboma. Other congenital anomalies include imperforate anus, horseshoe kidney, and structural cardiac defects. Some patients have been reported with normal motor and cognitive development.</description>
        <dbReference type="MIM" id="619318"/>
    </disease>
    <text>The disease may be caused by variants affecting the gene represented in this entry.</text>
</comment>
<comment type="similarity">
    <text evidence="8">Belongs to the peptidase C2 family.</text>
</comment>
<evidence type="ECO:0000250" key="1"/>
<evidence type="ECO:0000255" key="2">
    <source>
        <dbReference type="PROSITE-ProRule" id="PRU00239"/>
    </source>
</evidence>
<evidence type="ECO:0000255" key="3">
    <source>
        <dbReference type="PROSITE-ProRule" id="PRU00322"/>
    </source>
</evidence>
<evidence type="ECO:0000256" key="4">
    <source>
        <dbReference type="SAM" id="MobiDB-lite"/>
    </source>
</evidence>
<evidence type="ECO:0000269" key="5">
    <source>
    </source>
</evidence>
<evidence type="ECO:0000269" key="6">
    <source>
    </source>
</evidence>
<evidence type="ECO:0000303" key="7">
    <source>
    </source>
</evidence>
<evidence type="ECO:0000305" key="8"/>
<evidence type="ECO:0007744" key="9">
    <source>
    </source>
</evidence>
<reference key="1">
    <citation type="journal article" date="1998" name="Genomics">
        <title>SOLH, a human homologue of the Drosophila melanogaster small optic lobes gene is a member of the calpain and zinc-finger gene families and maps to human chromosome 16p13.3 near CATM (cataract with microphthalmia).</title>
        <authorList>
            <person name="Kamei M."/>
            <person name="Webb G.C."/>
            <person name="Young I.G."/>
            <person name="Campbell H.D."/>
        </authorList>
    </citation>
    <scope>NUCLEOTIDE SEQUENCE [MRNA] (ISOFORM 1)</scope>
    <scope>TISSUE SPECIFICITY</scope>
    <source>
        <tissue>Hippocampus</tissue>
    </source>
</reference>
<reference key="2">
    <citation type="journal article" date="2001" name="Hum. Mol. Genet.">
        <title>Sequence, structure and pathology of the fully annotated terminal 2 Mb of the short arm of human chromosome 16.</title>
        <authorList>
            <person name="Daniels R.J."/>
            <person name="Peden J.F."/>
            <person name="Lloyd C."/>
            <person name="Horsley S.W."/>
            <person name="Clark K."/>
            <person name="Tufarelli C."/>
            <person name="Kearney L."/>
            <person name="Buckle V.J."/>
            <person name="Doggett N.A."/>
            <person name="Flint J."/>
            <person name="Higgs D.R."/>
        </authorList>
    </citation>
    <scope>NUCLEOTIDE SEQUENCE [LARGE SCALE GENOMIC DNA]</scope>
</reference>
<reference key="3">
    <citation type="journal article" date="2004" name="Nature">
        <title>The sequence and analysis of duplication-rich human chromosome 16.</title>
        <authorList>
            <person name="Martin J."/>
            <person name="Han C."/>
            <person name="Gordon L.A."/>
            <person name="Terry A."/>
            <person name="Prabhakar S."/>
            <person name="She X."/>
            <person name="Xie G."/>
            <person name="Hellsten U."/>
            <person name="Chan Y.M."/>
            <person name="Altherr M."/>
            <person name="Couronne O."/>
            <person name="Aerts A."/>
            <person name="Bajorek E."/>
            <person name="Black S."/>
            <person name="Blumer H."/>
            <person name="Branscomb E."/>
            <person name="Brown N.C."/>
            <person name="Bruno W.J."/>
            <person name="Buckingham J.M."/>
            <person name="Callen D.F."/>
            <person name="Campbell C.S."/>
            <person name="Campbell M.L."/>
            <person name="Campbell E.W."/>
            <person name="Caoile C."/>
            <person name="Challacombe J.F."/>
            <person name="Chasteen L.A."/>
            <person name="Chertkov O."/>
            <person name="Chi H.C."/>
            <person name="Christensen M."/>
            <person name="Clark L.M."/>
            <person name="Cohn J.D."/>
            <person name="Denys M."/>
            <person name="Detter J.C."/>
            <person name="Dickson M."/>
            <person name="Dimitrijevic-Bussod M."/>
            <person name="Escobar J."/>
            <person name="Fawcett J.J."/>
            <person name="Flowers D."/>
            <person name="Fotopulos D."/>
            <person name="Glavina T."/>
            <person name="Gomez M."/>
            <person name="Gonzales E."/>
            <person name="Goodstein D."/>
            <person name="Goodwin L.A."/>
            <person name="Grady D.L."/>
            <person name="Grigoriev I."/>
            <person name="Groza M."/>
            <person name="Hammon N."/>
            <person name="Hawkins T."/>
            <person name="Haydu L."/>
            <person name="Hildebrand C.E."/>
            <person name="Huang W."/>
            <person name="Israni S."/>
            <person name="Jett J."/>
            <person name="Jewett P.B."/>
            <person name="Kadner K."/>
            <person name="Kimball H."/>
            <person name="Kobayashi A."/>
            <person name="Krawczyk M.-C."/>
            <person name="Leyba T."/>
            <person name="Longmire J.L."/>
            <person name="Lopez F."/>
            <person name="Lou Y."/>
            <person name="Lowry S."/>
            <person name="Ludeman T."/>
            <person name="Manohar C.F."/>
            <person name="Mark G.A."/>
            <person name="McMurray K.L."/>
            <person name="Meincke L.J."/>
            <person name="Morgan J."/>
            <person name="Moyzis R.K."/>
            <person name="Mundt M.O."/>
            <person name="Munk A.C."/>
            <person name="Nandkeshwar R.D."/>
            <person name="Pitluck S."/>
            <person name="Pollard M."/>
            <person name="Predki P."/>
            <person name="Parson-Quintana B."/>
            <person name="Ramirez L."/>
            <person name="Rash S."/>
            <person name="Retterer J."/>
            <person name="Ricke D.O."/>
            <person name="Robinson D.L."/>
            <person name="Rodriguez A."/>
            <person name="Salamov A."/>
            <person name="Saunders E.H."/>
            <person name="Scott D."/>
            <person name="Shough T."/>
            <person name="Stallings R.L."/>
            <person name="Stalvey M."/>
            <person name="Sutherland R.D."/>
            <person name="Tapia R."/>
            <person name="Tesmer J.G."/>
            <person name="Thayer N."/>
            <person name="Thompson L.S."/>
            <person name="Tice H."/>
            <person name="Torney D.C."/>
            <person name="Tran-Gyamfi M."/>
            <person name="Tsai M."/>
            <person name="Ulanovsky L.E."/>
            <person name="Ustaszewska A."/>
            <person name="Vo N."/>
            <person name="White P.S."/>
            <person name="Williams A.L."/>
            <person name="Wills P.L."/>
            <person name="Wu J.-R."/>
            <person name="Wu K."/>
            <person name="Yang J."/>
            <person name="DeJong P."/>
            <person name="Bruce D."/>
            <person name="Doggett N.A."/>
            <person name="Deaven L."/>
            <person name="Schmutz J."/>
            <person name="Grimwood J."/>
            <person name="Richardson P."/>
            <person name="Rokhsar D.S."/>
            <person name="Eichler E.E."/>
            <person name="Gilna P."/>
            <person name="Lucas S.M."/>
            <person name="Myers R.M."/>
            <person name="Rubin E.M."/>
            <person name="Pennacchio L.A."/>
        </authorList>
    </citation>
    <scope>NUCLEOTIDE SEQUENCE [LARGE SCALE GENOMIC DNA]</scope>
</reference>
<reference key="4">
    <citation type="submission" date="2005-09" db="EMBL/GenBank/DDBJ databases">
        <authorList>
            <person name="Mural R.J."/>
            <person name="Istrail S."/>
            <person name="Sutton G.G."/>
            <person name="Florea L."/>
            <person name="Halpern A.L."/>
            <person name="Mobarry C.M."/>
            <person name="Lippert R."/>
            <person name="Walenz B."/>
            <person name="Shatkay H."/>
            <person name="Dew I."/>
            <person name="Miller J.R."/>
            <person name="Flanigan M.J."/>
            <person name="Edwards N.J."/>
            <person name="Bolanos R."/>
            <person name="Fasulo D."/>
            <person name="Halldorsson B.V."/>
            <person name="Hannenhalli S."/>
            <person name="Turner R."/>
            <person name="Yooseph S."/>
            <person name="Lu F."/>
            <person name="Nusskern D.R."/>
            <person name="Shue B.C."/>
            <person name="Zheng X.H."/>
            <person name="Zhong F."/>
            <person name="Delcher A.L."/>
            <person name="Huson D.H."/>
            <person name="Kravitz S.A."/>
            <person name="Mouchard L."/>
            <person name="Reinert K."/>
            <person name="Remington K.A."/>
            <person name="Clark A.G."/>
            <person name="Waterman M.S."/>
            <person name="Eichler E.E."/>
            <person name="Adams M.D."/>
            <person name="Hunkapiller M.W."/>
            <person name="Myers E.W."/>
            <person name="Venter J.C."/>
        </authorList>
    </citation>
    <scope>NUCLEOTIDE SEQUENCE [LARGE SCALE GENOMIC DNA]</scope>
</reference>
<reference key="5">
    <citation type="journal article" date="2004" name="Genome Res.">
        <title>The status, quality, and expansion of the NIH full-length cDNA project: the Mammalian Gene Collection (MGC).</title>
        <authorList>
            <consortium name="The MGC Project Team"/>
        </authorList>
    </citation>
    <scope>NUCLEOTIDE SEQUENCE [LARGE SCALE MRNA] (ISOFORM 2)</scope>
    <scope>NUCLEOTIDE SEQUENCE [LARGE SCALE MRNA] OF 525-1086 (ISOFORM 1)</scope>
    <source>
        <tissue>Embryonic stem cell</tissue>
        <tissue>Lung</tissue>
        <tissue>Placenta</tissue>
    </source>
</reference>
<reference key="6">
    <citation type="journal article" date="2009" name="Anal. Chem.">
        <title>Lys-N and trypsin cover complementary parts of the phosphoproteome in a refined SCX-based approach.</title>
        <authorList>
            <person name="Gauci S."/>
            <person name="Helbig A.O."/>
            <person name="Slijper M."/>
            <person name="Krijgsveld J."/>
            <person name="Heck A.J."/>
            <person name="Mohammed S."/>
        </authorList>
    </citation>
    <scope>IDENTIFICATION BY MASS SPECTROMETRY [LARGE SCALE ANALYSIS]</scope>
</reference>
<reference key="7">
    <citation type="journal article" date="2013" name="J. Proteome Res.">
        <title>Toward a comprehensive characterization of a human cancer cell phosphoproteome.</title>
        <authorList>
            <person name="Zhou H."/>
            <person name="Di Palma S."/>
            <person name="Preisinger C."/>
            <person name="Peng M."/>
            <person name="Polat A.N."/>
            <person name="Heck A.J."/>
            <person name="Mohammed S."/>
        </authorList>
    </citation>
    <scope>PHOSPHORYLATION [LARGE SCALE ANALYSIS] AT SER-296; SER-335; SER-338 AND SER-1070</scope>
    <scope>IDENTIFICATION BY MASS SPECTROMETRY [LARGE SCALE ANALYSIS]</scope>
    <source>
        <tissue>Cervix carcinoma</tissue>
        <tissue>Erythroleukemia</tissue>
    </source>
</reference>
<reference key="8">
    <citation type="journal article" date="2020" name="Hum. Mol. Genet.">
        <title>Biallelic variants in the small optic lobe calpain CAPN15 are associated with congenital eye anomalies, deafness and other neurodevelopmental deficits.</title>
        <authorList>
            <person name="Zha C."/>
            <person name="Farah C.A."/>
            <person name="Holt R.J."/>
            <person name="Ceroni F."/>
            <person name="Al-Abdi L."/>
            <person name="Thuriot F."/>
            <person name="Khan A.O."/>
            <person name="Helaby R."/>
            <person name="Levesque S."/>
            <person name="Alkuraya F.S."/>
            <person name="Kraus A."/>
            <person name="Ragge N.K."/>
            <person name="Sossin W.S."/>
        </authorList>
    </citation>
    <scope>INVOLVEMENT IN OGIN</scope>
    <scope>VARIANTS OGIN LEU-613; PHE-720; TRP-800; SER-969 AND LYS-1028</scope>
</reference>
<accession>O75808</accession>
<accession>B1B1M4</accession>
<accession>Q2KHS2</accession>
<accession>Q8WTY9</accession>
<accession>Q9BUW0</accession>
<name>CAN15_HUMAN</name>
<organism>
    <name type="scientific">Homo sapiens</name>
    <name type="common">Human</name>
    <dbReference type="NCBI Taxonomy" id="9606"/>
    <lineage>
        <taxon>Eukaryota</taxon>
        <taxon>Metazoa</taxon>
        <taxon>Chordata</taxon>
        <taxon>Craniata</taxon>
        <taxon>Vertebrata</taxon>
        <taxon>Euteleostomi</taxon>
        <taxon>Mammalia</taxon>
        <taxon>Eutheria</taxon>
        <taxon>Euarchontoglires</taxon>
        <taxon>Primates</taxon>
        <taxon>Haplorrhini</taxon>
        <taxon>Catarrhini</taxon>
        <taxon>Hominidae</taxon>
        <taxon>Homo</taxon>
    </lineage>
</organism>
<sequence length="1086" mass="117314">MATVGEWSCVRCTFLNPAGQRQCSICEAPRHKPDLNHILRLSVEEQKWPCARCTFRNFLGKEACEVCGFTPEPAPGAAFLPVLNGVLPKPPAILGEPKGSCQEEAGPVRTAGLVATEPARGQCEDKDEEEKEEQEEEEGAAEPRGGWACPRCTLHNTPVASSCSVCGGPRRLSLPRIPPEALVVPEVVAPAGFHVVPAAPPPGLPGEGAEANPPATSQGPAAEPEPPRVPPFSPFSSTLQNNPVPRSRREVPPQLQPPVPEAAQPSPSAGCRGAPQGSGWAGASRLAELLSGKRLSVLEEEATEGGTSRVEAGSSTSGSDIIDLAGDTVRYTPASPSSPDFTTWSCAKCTLRNPTVAPRCSACGCSKLHGFQEHGEPPTHCPDCGADKPSPCGRSCGRVSSAQKAARVLPERPGQWACPACTLLNALRAKHCAACHTPQLLVAQRRGAAPLRRRESMHVEQRRQTDEGEAKALWENIVAFCRENNVSFVDDSFPPGPESVGFPAGDSVQQRVRQWLRPQEINCSVFRDHRATWSVFHTLRPSDILQGLLGNCWFLSALAVLAERPDLVERVMVTRSLCAEGAYQVRLCKDGTWTTVLVDDMLPCDEAGCLLFSQAQRKQLWVALIEKALAKLHGSYFALQAGRAIEGLATLTGAPCESLALQLSSTNPREEPVDTDLIWAKMLSSKEAGFLMGASCGGGNMKVDDSAYESLGLRPRHAYSILDVRDVQGTRLLRLRNPWGRFSWNGSWSDEWPHWPGHLRGELMPHGSSEGVFWMEYGDFVRYFDSVDICKVHSDWQEARVQGCFPSSASAPVGVTALTVLERASLEFALFQEGSRRSDAVDSHLLDLCILVFRATFGSGGHLSLGRLLAHSKRAVKKFVSCDVMLEPGEYAVVCCAFNHWGPPLPGTPAPQASSPSAGVPRASPEPPGHVLAVYSSRLVMVEPVEAQPTTLADAIILLTESRGERHEGREGMTCYYLTHGWAGLIVVVENRHPKAYLHVQCDCTDSFNVVSTRGSLRTQDSVPPLHRQVLVILSQLEGNAGFSITHRLAHRKAAQAFLSDWTASKGTHSPPLTPEVAGLHGPRPL</sequence>
<dbReference type="EC" id="3.4.22.-"/>
<dbReference type="EMBL" id="U85647">
    <property type="protein sequence ID" value="AAC33822.1"/>
    <property type="molecule type" value="mRNA"/>
</dbReference>
<dbReference type="EMBL" id="AE006464">
    <property type="protein sequence ID" value="AAK61233.1"/>
    <property type="molecule type" value="Genomic_DNA"/>
</dbReference>
<dbReference type="EMBL" id="Z97986">
    <property type="status" value="NOT_ANNOTATED_CDS"/>
    <property type="molecule type" value="Genomic_DNA"/>
</dbReference>
<dbReference type="EMBL" id="CH471112">
    <property type="protein sequence ID" value="EAW85803.1"/>
    <property type="molecule type" value="Genomic_DNA"/>
</dbReference>
<dbReference type="EMBL" id="BC001869">
    <property type="protein sequence ID" value="AAH01869.1"/>
    <property type="molecule type" value="mRNA"/>
</dbReference>
<dbReference type="EMBL" id="BC021854">
    <property type="protein sequence ID" value="AAH21854.1"/>
    <property type="molecule type" value="mRNA"/>
</dbReference>
<dbReference type="EMBL" id="BC112918">
    <property type="protein sequence ID" value="AAI12919.1"/>
    <property type="molecule type" value="mRNA"/>
</dbReference>
<dbReference type="CCDS" id="CCDS10410.1">
    <molecule id="O75808-1"/>
</dbReference>
<dbReference type="RefSeq" id="NP_005623.1">
    <molecule id="O75808-1"/>
    <property type="nucleotide sequence ID" value="NM_005632.3"/>
</dbReference>
<dbReference type="RefSeq" id="XP_047290489.1">
    <molecule id="O75808-1"/>
    <property type="nucleotide sequence ID" value="XM_047434533.1"/>
</dbReference>
<dbReference type="RefSeq" id="XP_054169750.1">
    <molecule id="O75808-1"/>
    <property type="nucleotide sequence ID" value="XM_054313775.1"/>
</dbReference>
<dbReference type="SMR" id="O75808"/>
<dbReference type="BioGRID" id="112533">
    <property type="interactions" value="36"/>
</dbReference>
<dbReference type="FunCoup" id="O75808">
    <property type="interactions" value="903"/>
</dbReference>
<dbReference type="IntAct" id="O75808">
    <property type="interactions" value="24"/>
</dbReference>
<dbReference type="MINT" id="O75808"/>
<dbReference type="STRING" id="9606.ENSP00000219611"/>
<dbReference type="MEROPS" id="C02.031"/>
<dbReference type="GlyGen" id="O75808">
    <property type="glycosylation" value="2 sites, 1 O-linked glycan (1 site)"/>
</dbReference>
<dbReference type="iPTMnet" id="O75808"/>
<dbReference type="PhosphoSitePlus" id="O75808"/>
<dbReference type="BioMuta" id="CAPN15"/>
<dbReference type="jPOST" id="O75808"/>
<dbReference type="MassIVE" id="O75808"/>
<dbReference type="PaxDb" id="9606-ENSP00000219611"/>
<dbReference type="PeptideAtlas" id="O75808"/>
<dbReference type="ProteomicsDB" id="50203">
    <molecule id="O75808-1"/>
</dbReference>
<dbReference type="ProteomicsDB" id="50204">
    <molecule id="O75808-2"/>
</dbReference>
<dbReference type="Pumba" id="O75808"/>
<dbReference type="Antibodypedia" id="22715">
    <property type="antibodies" value="78 antibodies from 15 providers"/>
</dbReference>
<dbReference type="DNASU" id="6650"/>
<dbReference type="Ensembl" id="ENST00000219611.7">
    <molecule id="O75808-1"/>
    <property type="protein sequence ID" value="ENSP00000219611.2"/>
    <property type="gene ID" value="ENSG00000103326.12"/>
</dbReference>
<dbReference type="GeneID" id="6650"/>
<dbReference type="KEGG" id="hsa:6650"/>
<dbReference type="MANE-Select" id="ENST00000219611.7">
    <property type="protein sequence ID" value="ENSP00000219611.2"/>
    <property type="RefSeq nucleotide sequence ID" value="NM_005632.3"/>
    <property type="RefSeq protein sequence ID" value="NP_005623.1"/>
</dbReference>
<dbReference type="UCSC" id="uc002chi.3">
    <molecule id="O75808-1"/>
    <property type="organism name" value="human"/>
</dbReference>
<dbReference type="AGR" id="HGNC:11182"/>
<dbReference type="CTD" id="6650"/>
<dbReference type="DisGeNET" id="6650"/>
<dbReference type="GeneCards" id="CAPN15"/>
<dbReference type="HGNC" id="HGNC:11182">
    <property type="gene designation" value="CAPN15"/>
</dbReference>
<dbReference type="HPA" id="ENSG00000103326">
    <property type="expression patterns" value="Low tissue specificity"/>
</dbReference>
<dbReference type="MalaCards" id="CAPN15"/>
<dbReference type="MIM" id="603267">
    <property type="type" value="gene"/>
</dbReference>
<dbReference type="MIM" id="619318">
    <property type="type" value="phenotype"/>
</dbReference>
<dbReference type="neXtProt" id="NX_O75808"/>
<dbReference type="OpenTargets" id="ENSG00000103326"/>
<dbReference type="Orphanet" id="611201">
    <property type="disease" value="Oculogastrointestinal-neurodevelopmental syndrome"/>
</dbReference>
<dbReference type="PharmGKB" id="PA36019"/>
<dbReference type="VEuPathDB" id="HostDB:ENSG00000103326"/>
<dbReference type="eggNOG" id="KOG0045">
    <property type="taxonomic scope" value="Eukaryota"/>
</dbReference>
<dbReference type="GeneTree" id="ENSGT00940000158312"/>
<dbReference type="HOGENOM" id="CLU_003001_0_0_1"/>
<dbReference type="InParanoid" id="O75808"/>
<dbReference type="OMA" id="AWRMAEP"/>
<dbReference type="OrthoDB" id="424753at2759"/>
<dbReference type="PAN-GO" id="O75808">
    <property type="GO annotations" value="3 GO annotations based on evolutionary models"/>
</dbReference>
<dbReference type="PhylomeDB" id="O75808"/>
<dbReference type="TreeFam" id="TF322245"/>
<dbReference type="BRENDA" id="3.4.22.B35">
    <property type="organism ID" value="2681"/>
</dbReference>
<dbReference type="PathwayCommons" id="O75808"/>
<dbReference type="Reactome" id="R-HSA-1474228">
    <property type="pathway name" value="Degradation of the extracellular matrix"/>
</dbReference>
<dbReference type="SignaLink" id="O75808"/>
<dbReference type="BioGRID-ORCS" id="6650">
    <property type="hits" value="15 hits in 1151 CRISPR screens"/>
</dbReference>
<dbReference type="GenomeRNAi" id="6650"/>
<dbReference type="Pharos" id="O75808">
    <property type="development level" value="Tbio"/>
</dbReference>
<dbReference type="PRO" id="PR:O75808"/>
<dbReference type="Proteomes" id="UP000005640">
    <property type="component" value="Chromosome 16"/>
</dbReference>
<dbReference type="RNAct" id="O75808">
    <property type="molecule type" value="protein"/>
</dbReference>
<dbReference type="Bgee" id="ENSG00000103326">
    <property type="expression patterns" value="Expressed in lower esophagus mucosa and 156 other cell types or tissues"/>
</dbReference>
<dbReference type="ExpressionAtlas" id="O75808">
    <property type="expression patterns" value="baseline and differential"/>
</dbReference>
<dbReference type="GO" id="GO:0005737">
    <property type="term" value="C:cytoplasm"/>
    <property type="evidence" value="ECO:0000318"/>
    <property type="project" value="GO_Central"/>
</dbReference>
<dbReference type="GO" id="GO:0004198">
    <property type="term" value="F:calcium-dependent cysteine-type endopeptidase activity"/>
    <property type="evidence" value="ECO:0000318"/>
    <property type="project" value="GO_Central"/>
</dbReference>
<dbReference type="GO" id="GO:0008270">
    <property type="term" value="F:zinc ion binding"/>
    <property type="evidence" value="ECO:0007669"/>
    <property type="project" value="UniProtKB-KW"/>
</dbReference>
<dbReference type="GO" id="GO:0006508">
    <property type="term" value="P:proteolysis"/>
    <property type="evidence" value="ECO:0000318"/>
    <property type="project" value="GO_Central"/>
</dbReference>
<dbReference type="CDD" id="cd00044">
    <property type="entry name" value="CysPc"/>
    <property type="match status" value="1"/>
</dbReference>
<dbReference type="FunFam" id="2.30.30.380:FF:000019">
    <property type="entry name" value="Calpain 15"/>
    <property type="match status" value="1"/>
</dbReference>
<dbReference type="FunFam" id="3.90.70.10:FF:000010">
    <property type="entry name" value="Calpain 15"/>
    <property type="match status" value="1"/>
</dbReference>
<dbReference type="FunFam" id="4.10.1060.10:FF:000010">
    <property type="entry name" value="Calpain 15"/>
    <property type="match status" value="1"/>
</dbReference>
<dbReference type="FunFam" id="4.10.1060.10:FF:000019">
    <property type="entry name" value="Calpain 15"/>
    <property type="match status" value="1"/>
</dbReference>
<dbReference type="Gene3D" id="3.90.70.10">
    <property type="entry name" value="Cysteine proteinases"/>
    <property type="match status" value="1"/>
</dbReference>
<dbReference type="Gene3D" id="4.10.1060.10">
    <property type="entry name" value="Zinc finger, RanBP2-type"/>
    <property type="match status" value="2"/>
</dbReference>
<dbReference type="Gene3D" id="2.30.30.380">
    <property type="entry name" value="Zn-finger domain of Sec23/24"/>
    <property type="match status" value="1"/>
</dbReference>
<dbReference type="InterPro" id="IPR022684">
    <property type="entry name" value="Calpain_cysteine_protease"/>
</dbReference>
<dbReference type="InterPro" id="IPR038765">
    <property type="entry name" value="Papain-like_cys_pep_sf"/>
</dbReference>
<dbReference type="InterPro" id="IPR000169">
    <property type="entry name" value="Pept_cys_AS"/>
</dbReference>
<dbReference type="InterPro" id="IPR001300">
    <property type="entry name" value="Peptidase_C2_calpain_cat"/>
</dbReference>
<dbReference type="InterPro" id="IPR001876">
    <property type="entry name" value="Znf_RanBP2"/>
</dbReference>
<dbReference type="InterPro" id="IPR036443">
    <property type="entry name" value="Znf_RanBP2_sf"/>
</dbReference>
<dbReference type="PANTHER" id="PTHR10183">
    <property type="entry name" value="CALPAIN"/>
    <property type="match status" value="1"/>
</dbReference>
<dbReference type="PANTHER" id="PTHR10183:SF382">
    <property type="entry name" value="CALPAIN-15"/>
    <property type="match status" value="1"/>
</dbReference>
<dbReference type="Pfam" id="PF00648">
    <property type="entry name" value="Peptidase_C2"/>
    <property type="match status" value="1"/>
</dbReference>
<dbReference type="Pfam" id="PF00641">
    <property type="entry name" value="Zn_ribbon_RanBP"/>
    <property type="match status" value="4"/>
</dbReference>
<dbReference type="PRINTS" id="PR00704">
    <property type="entry name" value="CALPAIN"/>
</dbReference>
<dbReference type="SMART" id="SM00230">
    <property type="entry name" value="CysPc"/>
    <property type="match status" value="1"/>
</dbReference>
<dbReference type="SMART" id="SM00547">
    <property type="entry name" value="ZnF_RBZ"/>
    <property type="match status" value="5"/>
</dbReference>
<dbReference type="SUPFAM" id="SSF54001">
    <property type="entry name" value="Cysteine proteinases"/>
    <property type="match status" value="1"/>
</dbReference>
<dbReference type="SUPFAM" id="SSF90209">
    <property type="entry name" value="Ran binding protein zinc finger-like"/>
    <property type="match status" value="3"/>
</dbReference>
<dbReference type="PROSITE" id="PS50203">
    <property type="entry name" value="CALPAIN_CAT"/>
    <property type="match status" value="1"/>
</dbReference>
<dbReference type="PROSITE" id="PS00139">
    <property type="entry name" value="THIOL_PROTEASE_CYS"/>
    <property type="match status" value="1"/>
</dbReference>
<dbReference type="PROSITE" id="PS01358">
    <property type="entry name" value="ZF_RANBP2_1"/>
    <property type="match status" value="5"/>
</dbReference>
<dbReference type="PROSITE" id="PS50199">
    <property type="entry name" value="ZF_RANBP2_2"/>
    <property type="match status" value="4"/>
</dbReference>
<keyword id="KW-0025">Alternative splicing</keyword>
<keyword id="KW-0209">Deafness</keyword>
<keyword id="KW-0378">Hydrolase</keyword>
<keyword id="KW-0479">Metal-binding</keyword>
<keyword id="KW-1013">Microphthalmia</keyword>
<keyword id="KW-0597">Phosphoprotein</keyword>
<keyword id="KW-0645">Protease</keyword>
<keyword id="KW-1267">Proteomics identification</keyword>
<keyword id="KW-1185">Reference proteome</keyword>
<keyword id="KW-0677">Repeat</keyword>
<keyword id="KW-0788">Thiol protease</keyword>
<keyword id="KW-0862">Zinc</keyword>
<keyword id="KW-0863">Zinc-finger</keyword>
<proteinExistence type="evidence at protein level"/>
<gene>
    <name type="primary">CAPN15</name>
    <name type="synonym">SOLH</name>
</gene>